<feature type="chain" id="PRO_0000131893" description="Cytidylate kinase">
    <location>
        <begin position="1"/>
        <end position="230"/>
    </location>
</feature>
<feature type="binding site" evidence="1">
    <location>
        <begin position="14"/>
        <end position="22"/>
    </location>
    <ligand>
        <name>ATP</name>
        <dbReference type="ChEBI" id="CHEBI:30616"/>
    </ligand>
</feature>
<dbReference type="EC" id="2.7.4.25" evidence="1"/>
<dbReference type="EMBL" id="AE016826">
    <property type="protein sequence ID" value="AAO27012.1"/>
    <property type="molecule type" value="Genomic_DNA"/>
</dbReference>
<dbReference type="RefSeq" id="WP_011091413.1">
    <property type="nucleotide sequence ID" value="NC_004545.1"/>
</dbReference>
<dbReference type="SMR" id="P59580"/>
<dbReference type="STRING" id="224915.bbp_287"/>
<dbReference type="KEGG" id="bab:bbp_287"/>
<dbReference type="eggNOG" id="COG0283">
    <property type="taxonomic scope" value="Bacteria"/>
</dbReference>
<dbReference type="HOGENOM" id="CLU_079959_2_0_6"/>
<dbReference type="OrthoDB" id="9807434at2"/>
<dbReference type="Proteomes" id="UP000000601">
    <property type="component" value="Chromosome"/>
</dbReference>
<dbReference type="GO" id="GO:0005737">
    <property type="term" value="C:cytoplasm"/>
    <property type="evidence" value="ECO:0007669"/>
    <property type="project" value="UniProtKB-SubCell"/>
</dbReference>
<dbReference type="GO" id="GO:0005524">
    <property type="term" value="F:ATP binding"/>
    <property type="evidence" value="ECO:0007669"/>
    <property type="project" value="UniProtKB-UniRule"/>
</dbReference>
<dbReference type="GO" id="GO:0036430">
    <property type="term" value="F:CMP kinase activity"/>
    <property type="evidence" value="ECO:0007669"/>
    <property type="project" value="RHEA"/>
</dbReference>
<dbReference type="GO" id="GO:0036431">
    <property type="term" value="F:dCMP kinase activity"/>
    <property type="evidence" value="ECO:0007669"/>
    <property type="project" value="RHEA"/>
</dbReference>
<dbReference type="GO" id="GO:0006220">
    <property type="term" value="P:pyrimidine nucleotide metabolic process"/>
    <property type="evidence" value="ECO:0007669"/>
    <property type="project" value="UniProtKB-UniRule"/>
</dbReference>
<dbReference type="CDD" id="cd02020">
    <property type="entry name" value="CMPK"/>
    <property type="match status" value="1"/>
</dbReference>
<dbReference type="Gene3D" id="3.40.50.300">
    <property type="entry name" value="P-loop containing nucleotide triphosphate hydrolases"/>
    <property type="match status" value="1"/>
</dbReference>
<dbReference type="HAMAP" id="MF_00238">
    <property type="entry name" value="Cytidyl_kinase_type1"/>
    <property type="match status" value="1"/>
</dbReference>
<dbReference type="InterPro" id="IPR003136">
    <property type="entry name" value="Cytidylate_kin"/>
</dbReference>
<dbReference type="InterPro" id="IPR011994">
    <property type="entry name" value="Cytidylate_kinase_dom"/>
</dbReference>
<dbReference type="InterPro" id="IPR027417">
    <property type="entry name" value="P-loop_NTPase"/>
</dbReference>
<dbReference type="NCBIfam" id="TIGR00017">
    <property type="entry name" value="cmk"/>
    <property type="match status" value="1"/>
</dbReference>
<dbReference type="Pfam" id="PF02224">
    <property type="entry name" value="Cytidylate_kin"/>
    <property type="match status" value="1"/>
</dbReference>
<dbReference type="SUPFAM" id="SSF52540">
    <property type="entry name" value="P-loop containing nucleoside triphosphate hydrolases"/>
    <property type="match status" value="1"/>
</dbReference>
<name>KCY_BUCBP</name>
<protein>
    <recommendedName>
        <fullName evidence="1">Cytidylate kinase</fullName>
        <shortName evidence="1">CK</shortName>
        <ecNumber evidence="1">2.7.4.25</ecNumber>
    </recommendedName>
    <alternativeName>
        <fullName evidence="1">Cytidine monophosphate kinase</fullName>
        <shortName evidence="1">CMP kinase</shortName>
    </alternativeName>
</protein>
<evidence type="ECO:0000255" key="1">
    <source>
        <dbReference type="HAMAP-Rule" id="MF_00238"/>
    </source>
</evidence>
<sequence>MSFKNLVPVITIDGPSGVGKSSVCKVISKKLQWNVLESGWIYRVLAFIIFKNNVCFSSRNLNILFKNINLHDFIQRINFKNYVISQSLFTNISQEYIGNLASRLACIPYIRHFLLFQQRSFRKFPGLIANGRDMGTVVFPDAIIKFFLISDFKTRVARRCLEYEKKGINSCNYKKIFYDMKTRDQRDHNRKISPLIPAKNAILIDSTYMSLKQVSNVLLSYILKMQKFKL</sequence>
<gene>
    <name evidence="1" type="primary">cmk</name>
    <name type="ordered locus">bbp_287</name>
</gene>
<comment type="catalytic activity">
    <reaction evidence="1">
        <text>CMP + ATP = CDP + ADP</text>
        <dbReference type="Rhea" id="RHEA:11600"/>
        <dbReference type="ChEBI" id="CHEBI:30616"/>
        <dbReference type="ChEBI" id="CHEBI:58069"/>
        <dbReference type="ChEBI" id="CHEBI:60377"/>
        <dbReference type="ChEBI" id="CHEBI:456216"/>
        <dbReference type="EC" id="2.7.4.25"/>
    </reaction>
</comment>
<comment type="catalytic activity">
    <reaction evidence="1">
        <text>dCMP + ATP = dCDP + ADP</text>
        <dbReference type="Rhea" id="RHEA:25094"/>
        <dbReference type="ChEBI" id="CHEBI:30616"/>
        <dbReference type="ChEBI" id="CHEBI:57566"/>
        <dbReference type="ChEBI" id="CHEBI:58593"/>
        <dbReference type="ChEBI" id="CHEBI:456216"/>
        <dbReference type="EC" id="2.7.4.25"/>
    </reaction>
</comment>
<comment type="subcellular location">
    <subcellularLocation>
        <location evidence="1">Cytoplasm</location>
    </subcellularLocation>
</comment>
<comment type="similarity">
    <text evidence="1">Belongs to the cytidylate kinase family. Type 1 subfamily.</text>
</comment>
<accession>P59580</accession>
<proteinExistence type="inferred from homology"/>
<keyword id="KW-0067">ATP-binding</keyword>
<keyword id="KW-0963">Cytoplasm</keyword>
<keyword id="KW-0418">Kinase</keyword>
<keyword id="KW-0547">Nucleotide-binding</keyword>
<keyword id="KW-1185">Reference proteome</keyword>
<keyword id="KW-0808">Transferase</keyword>
<organism>
    <name type="scientific">Buchnera aphidicola subsp. Baizongia pistaciae (strain Bp)</name>
    <dbReference type="NCBI Taxonomy" id="224915"/>
    <lineage>
        <taxon>Bacteria</taxon>
        <taxon>Pseudomonadati</taxon>
        <taxon>Pseudomonadota</taxon>
        <taxon>Gammaproteobacteria</taxon>
        <taxon>Enterobacterales</taxon>
        <taxon>Erwiniaceae</taxon>
        <taxon>Buchnera</taxon>
    </lineage>
</organism>
<reference key="1">
    <citation type="journal article" date="2003" name="Proc. Natl. Acad. Sci. U.S.A.">
        <title>Reductive genome evolution in Buchnera aphidicola.</title>
        <authorList>
            <person name="van Ham R.C.H.J."/>
            <person name="Kamerbeek J."/>
            <person name="Palacios C."/>
            <person name="Rausell C."/>
            <person name="Abascal F."/>
            <person name="Bastolla U."/>
            <person name="Fernandez J.M."/>
            <person name="Jimenez L."/>
            <person name="Postigo M."/>
            <person name="Silva F.J."/>
            <person name="Tamames J."/>
            <person name="Viguera E."/>
            <person name="Latorre A."/>
            <person name="Valencia A."/>
            <person name="Moran F."/>
            <person name="Moya A."/>
        </authorList>
    </citation>
    <scope>NUCLEOTIDE SEQUENCE [LARGE SCALE GENOMIC DNA]</scope>
    <source>
        <strain>Bp</strain>
    </source>
</reference>